<accession>Q0BM40</accession>
<evidence type="ECO:0000255" key="1">
    <source>
        <dbReference type="HAMAP-Rule" id="MF_00249"/>
    </source>
</evidence>
<evidence type="ECO:0000256" key="2">
    <source>
        <dbReference type="SAM" id="MobiDB-lite"/>
    </source>
</evidence>
<gene>
    <name evidence="1" type="primary">hslU</name>
    <name type="ordered locus">FTH_0941</name>
</gene>
<name>HSLU_FRATO</name>
<sequence length="455" mass="51237">MTQIMTPKTIVHELERHIIGQNDAKKAVAIALRNRWRRMQLDNEMRQEVTPKNILMIGPTGVGKTEIARRLAKLADAPFIKVEATKFTEVGYVGKDVESIIRDLVETAVKMKREEAKEKVTEKAARLAEDRILDVLIPPARTSESKVGFANEPAEDAASKKEKENKTREIFRKKIQNGELDDKEIEIEVAVAPKTIGVMGPPGMEDMTSQLQDLFSSLSTDKKKNKKMRIKDAIKLAQDEEAAKLVNEEDIKARALEAVEQNGIVFLDEIDKVCRKSSNSGADVSREGVQRDLLPLVEGSTVSTKYGVIKTDHILFIASGAFHVAKPSDLIPELQGRLPIRVELKSLEIEDFVRILREPDCSILKQYIALMKTEGIDLSFEEDAIRKIAEIAYKVNEEVENIGARRLHTVMERLLEKISFDAPELVEKNINITTDYVNEKLGNLVKNKDLSQYIL</sequence>
<proteinExistence type="inferred from homology"/>
<comment type="function">
    <text evidence="1">ATPase subunit of a proteasome-like degradation complex; this subunit has chaperone activity. The binding of ATP and its subsequent hydrolysis by HslU are essential for unfolding of protein substrates subsequently hydrolyzed by HslV. HslU recognizes the N-terminal part of its protein substrates and unfolds these before they are guided to HslV for hydrolysis.</text>
</comment>
<comment type="subunit">
    <text evidence="1">A double ring-shaped homohexamer of HslV is capped on each side by a ring-shaped HslU homohexamer. The assembly of the HslU/HslV complex is dependent on binding of ATP.</text>
</comment>
<comment type="subcellular location">
    <subcellularLocation>
        <location evidence="1">Cytoplasm</location>
    </subcellularLocation>
</comment>
<comment type="similarity">
    <text evidence="1">Belongs to the ClpX chaperone family. HslU subfamily.</text>
</comment>
<organism>
    <name type="scientific">Francisella tularensis subsp. holarctica (strain OSU18)</name>
    <dbReference type="NCBI Taxonomy" id="393011"/>
    <lineage>
        <taxon>Bacteria</taxon>
        <taxon>Pseudomonadati</taxon>
        <taxon>Pseudomonadota</taxon>
        <taxon>Gammaproteobacteria</taxon>
        <taxon>Thiotrichales</taxon>
        <taxon>Francisellaceae</taxon>
        <taxon>Francisella</taxon>
    </lineage>
</organism>
<keyword id="KW-0067">ATP-binding</keyword>
<keyword id="KW-0143">Chaperone</keyword>
<keyword id="KW-0963">Cytoplasm</keyword>
<keyword id="KW-0547">Nucleotide-binding</keyword>
<dbReference type="EMBL" id="CP000437">
    <property type="protein sequence ID" value="ABI82844.1"/>
    <property type="molecule type" value="Genomic_DNA"/>
</dbReference>
<dbReference type="RefSeq" id="WP_003015770.1">
    <property type="nucleotide sequence ID" value="NC_017463.1"/>
</dbReference>
<dbReference type="SMR" id="Q0BM40"/>
<dbReference type="KEGG" id="fth:FTH_0941"/>
<dbReference type="GO" id="GO:0009376">
    <property type="term" value="C:HslUV protease complex"/>
    <property type="evidence" value="ECO:0007669"/>
    <property type="project" value="UniProtKB-UniRule"/>
</dbReference>
<dbReference type="GO" id="GO:0005524">
    <property type="term" value="F:ATP binding"/>
    <property type="evidence" value="ECO:0007669"/>
    <property type="project" value="UniProtKB-UniRule"/>
</dbReference>
<dbReference type="GO" id="GO:0016887">
    <property type="term" value="F:ATP hydrolysis activity"/>
    <property type="evidence" value="ECO:0007669"/>
    <property type="project" value="InterPro"/>
</dbReference>
<dbReference type="GO" id="GO:0008233">
    <property type="term" value="F:peptidase activity"/>
    <property type="evidence" value="ECO:0007669"/>
    <property type="project" value="InterPro"/>
</dbReference>
<dbReference type="GO" id="GO:0036402">
    <property type="term" value="F:proteasome-activating activity"/>
    <property type="evidence" value="ECO:0007669"/>
    <property type="project" value="UniProtKB-UniRule"/>
</dbReference>
<dbReference type="GO" id="GO:0043335">
    <property type="term" value="P:protein unfolding"/>
    <property type="evidence" value="ECO:0007669"/>
    <property type="project" value="UniProtKB-UniRule"/>
</dbReference>
<dbReference type="GO" id="GO:0051603">
    <property type="term" value="P:proteolysis involved in protein catabolic process"/>
    <property type="evidence" value="ECO:0007669"/>
    <property type="project" value="TreeGrafter"/>
</dbReference>
<dbReference type="CDD" id="cd19498">
    <property type="entry name" value="RecA-like_HslU"/>
    <property type="match status" value="1"/>
</dbReference>
<dbReference type="FunFam" id="3.40.50.300:FF:000213">
    <property type="entry name" value="ATP-dependent protease ATPase subunit HslU"/>
    <property type="match status" value="1"/>
</dbReference>
<dbReference type="FunFam" id="3.40.50.300:FF:000220">
    <property type="entry name" value="ATP-dependent protease ATPase subunit HslU"/>
    <property type="match status" value="1"/>
</dbReference>
<dbReference type="Gene3D" id="1.10.8.60">
    <property type="match status" value="1"/>
</dbReference>
<dbReference type="Gene3D" id="3.40.50.300">
    <property type="entry name" value="P-loop containing nucleotide triphosphate hydrolases"/>
    <property type="match status" value="2"/>
</dbReference>
<dbReference type="HAMAP" id="MF_00249">
    <property type="entry name" value="HslU"/>
    <property type="match status" value="1"/>
</dbReference>
<dbReference type="InterPro" id="IPR003593">
    <property type="entry name" value="AAA+_ATPase"/>
</dbReference>
<dbReference type="InterPro" id="IPR050052">
    <property type="entry name" value="ATP-dep_Clp_protease_ClpX"/>
</dbReference>
<dbReference type="InterPro" id="IPR003959">
    <property type="entry name" value="ATPase_AAA_core"/>
</dbReference>
<dbReference type="InterPro" id="IPR019489">
    <property type="entry name" value="Clp_ATPase_C"/>
</dbReference>
<dbReference type="InterPro" id="IPR004491">
    <property type="entry name" value="HslU"/>
</dbReference>
<dbReference type="InterPro" id="IPR027417">
    <property type="entry name" value="P-loop_NTPase"/>
</dbReference>
<dbReference type="NCBIfam" id="TIGR00390">
    <property type="entry name" value="hslU"/>
    <property type="match status" value="1"/>
</dbReference>
<dbReference type="NCBIfam" id="NF003544">
    <property type="entry name" value="PRK05201.1"/>
    <property type="match status" value="1"/>
</dbReference>
<dbReference type="PANTHER" id="PTHR48102">
    <property type="entry name" value="ATP-DEPENDENT CLP PROTEASE ATP-BINDING SUBUNIT CLPX-LIKE, MITOCHONDRIAL-RELATED"/>
    <property type="match status" value="1"/>
</dbReference>
<dbReference type="PANTHER" id="PTHR48102:SF3">
    <property type="entry name" value="ATP-DEPENDENT PROTEASE ATPASE SUBUNIT HSLU"/>
    <property type="match status" value="1"/>
</dbReference>
<dbReference type="Pfam" id="PF00004">
    <property type="entry name" value="AAA"/>
    <property type="match status" value="1"/>
</dbReference>
<dbReference type="Pfam" id="PF07724">
    <property type="entry name" value="AAA_2"/>
    <property type="match status" value="1"/>
</dbReference>
<dbReference type="SMART" id="SM00382">
    <property type="entry name" value="AAA"/>
    <property type="match status" value="1"/>
</dbReference>
<dbReference type="SMART" id="SM01086">
    <property type="entry name" value="ClpB_D2-small"/>
    <property type="match status" value="1"/>
</dbReference>
<dbReference type="SUPFAM" id="SSF52540">
    <property type="entry name" value="P-loop containing nucleoside triphosphate hydrolases"/>
    <property type="match status" value="1"/>
</dbReference>
<reference key="1">
    <citation type="journal article" date="2006" name="J. Bacteriol.">
        <title>Chromosome rearrangement and diversification of Francisella tularensis revealed by the type B (OSU18) genome sequence.</title>
        <authorList>
            <person name="Petrosino J.F."/>
            <person name="Xiang Q."/>
            <person name="Karpathy S.E."/>
            <person name="Jiang H."/>
            <person name="Yerrapragada S."/>
            <person name="Liu Y."/>
            <person name="Gioia J."/>
            <person name="Hemphill L."/>
            <person name="Gonzalez A."/>
            <person name="Raghavan T.M."/>
            <person name="Uzman A."/>
            <person name="Fox G.E."/>
            <person name="Highlander S."/>
            <person name="Reichard M."/>
            <person name="Morton R.J."/>
            <person name="Clinkenbeard K.D."/>
            <person name="Weinstock G.M."/>
        </authorList>
    </citation>
    <scope>NUCLEOTIDE SEQUENCE [LARGE SCALE GENOMIC DNA]</scope>
    <source>
        <strain>OSU18</strain>
    </source>
</reference>
<feature type="chain" id="PRO_1000012742" description="ATP-dependent protease ATPase subunit HslU">
    <location>
        <begin position="1"/>
        <end position="455"/>
    </location>
</feature>
<feature type="region of interest" description="Disordered" evidence="2">
    <location>
        <begin position="144"/>
        <end position="163"/>
    </location>
</feature>
<feature type="binding site" evidence="1">
    <location>
        <position position="19"/>
    </location>
    <ligand>
        <name>ATP</name>
        <dbReference type="ChEBI" id="CHEBI:30616"/>
    </ligand>
</feature>
<feature type="binding site" evidence="1">
    <location>
        <begin position="61"/>
        <end position="66"/>
    </location>
    <ligand>
        <name>ATP</name>
        <dbReference type="ChEBI" id="CHEBI:30616"/>
    </ligand>
</feature>
<feature type="binding site" evidence="1">
    <location>
        <position position="268"/>
    </location>
    <ligand>
        <name>ATP</name>
        <dbReference type="ChEBI" id="CHEBI:30616"/>
    </ligand>
</feature>
<feature type="binding site" evidence="1">
    <location>
        <position position="333"/>
    </location>
    <ligand>
        <name>ATP</name>
        <dbReference type="ChEBI" id="CHEBI:30616"/>
    </ligand>
</feature>
<feature type="binding site" evidence="1">
    <location>
        <position position="405"/>
    </location>
    <ligand>
        <name>ATP</name>
        <dbReference type="ChEBI" id="CHEBI:30616"/>
    </ligand>
</feature>
<protein>
    <recommendedName>
        <fullName evidence="1">ATP-dependent protease ATPase subunit HslU</fullName>
    </recommendedName>
    <alternativeName>
        <fullName evidence="1">Unfoldase HslU</fullName>
    </alternativeName>
</protein>